<proteinExistence type="inferred from homology"/>
<accession>Q6APB0</accession>
<organism>
    <name type="scientific">Desulfotalea psychrophila (strain LSv54 / DSM 12343)</name>
    <dbReference type="NCBI Taxonomy" id="177439"/>
    <lineage>
        <taxon>Bacteria</taxon>
        <taxon>Pseudomonadati</taxon>
        <taxon>Thermodesulfobacteriota</taxon>
        <taxon>Desulfobulbia</taxon>
        <taxon>Desulfobulbales</taxon>
        <taxon>Desulfocapsaceae</taxon>
        <taxon>Desulfotalea</taxon>
    </lineage>
</organism>
<comment type="function">
    <text evidence="1">Catalyzes the ferrous insertion into protoporphyrin IX.</text>
</comment>
<comment type="catalytic activity">
    <reaction evidence="1">
        <text>heme b + 2 H(+) = protoporphyrin IX + Fe(2+)</text>
        <dbReference type="Rhea" id="RHEA:22584"/>
        <dbReference type="ChEBI" id="CHEBI:15378"/>
        <dbReference type="ChEBI" id="CHEBI:29033"/>
        <dbReference type="ChEBI" id="CHEBI:57306"/>
        <dbReference type="ChEBI" id="CHEBI:60344"/>
        <dbReference type="EC" id="4.98.1.1"/>
    </reaction>
</comment>
<comment type="pathway">
    <text evidence="1">Porphyrin-containing compound metabolism; protoheme biosynthesis; protoheme from protoporphyrin-IX: step 1/1.</text>
</comment>
<comment type="subcellular location">
    <subcellularLocation>
        <location evidence="1">Cytoplasm</location>
    </subcellularLocation>
</comment>
<comment type="similarity">
    <text evidence="1">Belongs to the ferrochelatase family.</text>
</comment>
<gene>
    <name evidence="1" type="primary">hemH</name>
    <name type="ordered locus">DP1085</name>
</gene>
<name>HEMH_DESPS</name>
<keyword id="KW-0963">Cytoplasm</keyword>
<keyword id="KW-0350">Heme biosynthesis</keyword>
<keyword id="KW-0408">Iron</keyword>
<keyword id="KW-0456">Lyase</keyword>
<keyword id="KW-0479">Metal-binding</keyword>
<keyword id="KW-0627">Porphyrin biosynthesis</keyword>
<keyword id="KW-1185">Reference proteome</keyword>
<sequence>MQNIPTGVILLNMGGPTQTKDVRPFLYNLFSDREIIPLGPRLMQKPLAWLIAKRRAPKSAATYERIGGGSPLKQITEAQAEALEKSLQAHGNFTVTYAMRYWPPYCDEALDYLLSKGVERLVALSLYPHYSKATTGSSLTQLHKTLKKKNISLPLTEIPSWPKQRDYIAAIAANIKKGLATFHGEKTEIVYSAHSLPTSFIEAGDPYVEHTKQSIGAIEEITGKRGRLCFQSKSGPVEWLEPSTPDVLIQLAQEGVKNILMVPISFVSDHVETLYEIDILYKKQAKKLGMRLTSCPSLNTQEQFITGLRQLVLESSVNSD</sequence>
<dbReference type="EC" id="4.98.1.1" evidence="1"/>
<dbReference type="EMBL" id="CR522870">
    <property type="protein sequence ID" value="CAG35814.1"/>
    <property type="molecule type" value="Genomic_DNA"/>
</dbReference>
<dbReference type="RefSeq" id="WP_011188328.1">
    <property type="nucleotide sequence ID" value="NC_006138.1"/>
</dbReference>
<dbReference type="SMR" id="Q6APB0"/>
<dbReference type="STRING" id="177439.DP1085"/>
<dbReference type="KEGG" id="dps:DP1085"/>
<dbReference type="eggNOG" id="COG0276">
    <property type="taxonomic scope" value="Bacteria"/>
</dbReference>
<dbReference type="HOGENOM" id="CLU_018884_4_1_7"/>
<dbReference type="OrthoDB" id="9809741at2"/>
<dbReference type="UniPathway" id="UPA00252">
    <property type="reaction ID" value="UER00325"/>
</dbReference>
<dbReference type="Proteomes" id="UP000000602">
    <property type="component" value="Chromosome"/>
</dbReference>
<dbReference type="GO" id="GO:0005737">
    <property type="term" value="C:cytoplasm"/>
    <property type="evidence" value="ECO:0007669"/>
    <property type="project" value="UniProtKB-SubCell"/>
</dbReference>
<dbReference type="GO" id="GO:0004325">
    <property type="term" value="F:ferrochelatase activity"/>
    <property type="evidence" value="ECO:0007669"/>
    <property type="project" value="UniProtKB-UniRule"/>
</dbReference>
<dbReference type="GO" id="GO:0046872">
    <property type="term" value="F:metal ion binding"/>
    <property type="evidence" value="ECO:0007669"/>
    <property type="project" value="UniProtKB-KW"/>
</dbReference>
<dbReference type="GO" id="GO:0006783">
    <property type="term" value="P:heme biosynthetic process"/>
    <property type="evidence" value="ECO:0007669"/>
    <property type="project" value="UniProtKB-UniRule"/>
</dbReference>
<dbReference type="CDD" id="cd00419">
    <property type="entry name" value="Ferrochelatase_C"/>
    <property type="match status" value="1"/>
</dbReference>
<dbReference type="CDD" id="cd03411">
    <property type="entry name" value="Ferrochelatase_N"/>
    <property type="match status" value="1"/>
</dbReference>
<dbReference type="FunFam" id="3.40.50.1400:FF:000006">
    <property type="entry name" value="Ferrochelatase"/>
    <property type="match status" value="1"/>
</dbReference>
<dbReference type="Gene3D" id="3.40.50.1400">
    <property type="match status" value="2"/>
</dbReference>
<dbReference type="HAMAP" id="MF_00323">
    <property type="entry name" value="Ferrochelatase"/>
    <property type="match status" value="1"/>
</dbReference>
<dbReference type="InterPro" id="IPR001015">
    <property type="entry name" value="Ferrochelatase"/>
</dbReference>
<dbReference type="InterPro" id="IPR019772">
    <property type="entry name" value="Ferrochelatase_AS"/>
</dbReference>
<dbReference type="InterPro" id="IPR033644">
    <property type="entry name" value="Ferrochelatase_C"/>
</dbReference>
<dbReference type="InterPro" id="IPR033659">
    <property type="entry name" value="Ferrochelatase_N"/>
</dbReference>
<dbReference type="NCBIfam" id="TIGR00109">
    <property type="entry name" value="hemH"/>
    <property type="match status" value="1"/>
</dbReference>
<dbReference type="PANTHER" id="PTHR11108">
    <property type="entry name" value="FERROCHELATASE"/>
    <property type="match status" value="1"/>
</dbReference>
<dbReference type="PANTHER" id="PTHR11108:SF1">
    <property type="entry name" value="FERROCHELATASE, MITOCHONDRIAL"/>
    <property type="match status" value="1"/>
</dbReference>
<dbReference type="Pfam" id="PF00762">
    <property type="entry name" value="Ferrochelatase"/>
    <property type="match status" value="1"/>
</dbReference>
<dbReference type="SUPFAM" id="SSF53800">
    <property type="entry name" value="Chelatase"/>
    <property type="match status" value="1"/>
</dbReference>
<dbReference type="PROSITE" id="PS00534">
    <property type="entry name" value="FERROCHELATASE"/>
    <property type="match status" value="1"/>
</dbReference>
<reference key="1">
    <citation type="journal article" date="2004" name="Environ. Microbiol.">
        <title>The genome of Desulfotalea psychrophila, a sulfate-reducing bacterium from permanently cold Arctic sediments.</title>
        <authorList>
            <person name="Rabus R."/>
            <person name="Ruepp A."/>
            <person name="Frickey T."/>
            <person name="Rattei T."/>
            <person name="Fartmann B."/>
            <person name="Stark M."/>
            <person name="Bauer M."/>
            <person name="Zibat A."/>
            <person name="Lombardot T."/>
            <person name="Becker I."/>
            <person name="Amann J."/>
            <person name="Gellner K."/>
            <person name="Teeling H."/>
            <person name="Leuschner W.D."/>
            <person name="Gloeckner F.-O."/>
            <person name="Lupas A.N."/>
            <person name="Amann R."/>
            <person name="Klenk H.-P."/>
        </authorList>
    </citation>
    <scope>NUCLEOTIDE SEQUENCE [LARGE SCALE GENOMIC DNA]</scope>
    <source>
        <strain>DSM 12343 / LSv54</strain>
    </source>
</reference>
<evidence type="ECO:0000255" key="1">
    <source>
        <dbReference type="HAMAP-Rule" id="MF_00323"/>
    </source>
</evidence>
<feature type="chain" id="PRO_0000175137" description="Ferrochelatase">
    <location>
        <begin position="1"/>
        <end position="320"/>
    </location>
</feature>
<feature type="binding site" evidence="1">
    <location>
        <position position="194"/>
    </location>
    <ligand>
        <name>Fe cation</name>
        <dbReference type="ChEBI" id="CHEBI:24875"/>
    </ligand>
</feature>
<feature type="binding site" evidence="1">
    <location>
        <position position="272"/>
    </location>
    <ligand>
        <name>Fe cation</name>
        <dbReference type="ChEBI" id="CHEBI:24875"/>
    </ligand>
</feature>
<protein>
    <recommendedName>
        <fullName evidence="1">Ferrochelatase</fullName>
        <ecNumber evidence="1">4.98.1.1</ecNumber>
    </recommendedName>
    <alternativeName>
        <fullName evidence="1">Heme synthase</fullName>
    </alternativeName>
    <alternativeName>
        <fullName evidence="1">Protoheme ferro-lyase</fullName>
    </alternativeName>
</protein>